<proteinExistence type="inferred from homology"/>
<dbReference type="EMBL" id="Z68751">
    <property type="protein sequence ID" value="CAA92973.1"/>
    <property type="molecule type" value="Genomic_DNA"/>
</dbReference>
<dbReference type="EMBL" id="Z68751">
    <property type="protein sequence ID" value="CBZ01798.1"/>
    <property type="molecule type" value="Genomic_DNA"/>
</dbReference>
<dbReference type="PIR" id="T24521">
    <property type="entry name" value="T24521"/>
</dbReference>
<dbReference type="RefSeq" id="NP_001255536.1">
    <molecule id="Q22235-1"/>
    <property type="nucleotide sequence ID" value="NM_001268607.4"/>
</dbReference>
<dbReference type="RefSeq" id="NP_001255537.1">
    <molecule id="Q22235-2"/>
    <property type="nucleotide sequence ID" value="NM_001268608.3"/>
</dbReference>
<dbReference type="SMR" id="Q22235"/>
<dbReference type="DIP" id="DIP-24557N"/>
<dbReference type="FunCoup" id="Q22235">
    <property type="interactions" value="2063"/>
</dbReference>
<dbReference type="STRING" id="6239.T05E11.3a.1"/>
<dbReference type="GlyCosmos" id="Q22235">
    <property type="glycosylation" value="2 sites, No reported glycans"/>
</dbReference>
<dbReference type="PaxDb" id="6239-T05E11.3a.1"/>
<dbReference type="PeptideAtlas" id="Q22235"/>
<dbReference type="EnsemblMetazoa" id="T05E11.3a.1">
    <molecule id="Q22235-1"/>
    <property type="protein sequence ID" value="T05E11.3a.1"/>
    <property type="gene ID" value="WBGene00011480"/>
</dbReference>
<dbReference type="EnsemblMetazoa" id="T05E11.3a.2">
    <molecule id="Q22235-1"/>
    <property type="protein sequence ID" value="T05E11.3a.2"/>
    <property type="gene ID" value="WBGene00011480"/>
</dbReference>
<dbReference type="EnsemblMetazoa" id="T05E11.3b.1">
    <molecule id="Q22235-2"/>
    <property type="protein sequence ID" value="T05E11.3b.1"/>
    <property type="gene ID" value="WBGene00011480"/>
</dbReference>
<dbReference type="GeneID" id="178014"/>
<dbReference type="KEGG" id="cel:CELE_T05E11.3"/>
<dbReference type="UCSC" id="T05E11.3.1">
    <molecule id="Q22235-1"/>
    <property type="organism name" value="c. elegans"/>
</dbReference>
<dbReference type="AGR" id="WB:WBGene00011480"/>
<dbReference type="CTD" id="178014"/>
<dbReference type="WormBase" id="T05E11.3a">
    <molecule id="Q22235-1"/>
    <property type="protein sequence ID" value="CE06362"/>
    <property type="gene ID" value="WBGene00011480"/>
    <property type="gene designation" value="enpl-1"/>
</dbReference>
<dbReference type="WormBase" id="T05E11.3b">
    <molecule id="Q22235-2"/>
    <property type="protein sequence ID" value="CE45764"/>
    <property type="gene ID" value="WBGene00011480"/>
    <property type="gene designation" value="enpl-1"/>
</dbReference>
<dbReference type="eggNOG" id="KOG0020">
    <property type="taxonomic scope" value="Eukaryota"/>
</dbReference>
<dbReference type="GeneTree" id="ENSGT01020000230401"/>
<dbReference type="HOGENOM" id="CLU_006684_1_3_1"/>
<dbReference type="InParanoid" id="Q22235"/>
<dbReference type="OMA" id="YMLQETS"/>
<dbReference type="OrthoDB" id="5426351at2759"/>
<dbReference type="PhylomeDB" id="Q22235"/>
<dbReference type="Reactome" id="R-CEL-381426">
    <property type="pathway name" value="Regulation of Insulin-like Growth Factor (IGF) transport and uptake by Insulin-like Growth Factor Binding Proteins (IGFBPs)"/>
</dbReference>
<dbReference type="Reactome" id="R-CEL-6785807">
    <property type="pathway name" value="Interleukin-4 and Interleukin-13 signaling"/>
</dbReference>
<dbReference type="Reactome" id="R-CEL-8957275">
    <property type="pathway name" value="Post-translational protein phosphorylation"/>
</dbReference>
<dbReference type="PRO" id="PR:Q22235"/>
<dbReference type="Proteomes" id="UP000001940">
    <property type="component" value="Chromosome IV"/>
</dbReference>
<dbReference type="Bgee" id="WBGene00011480">
    <property type="expression patterns" value="Expressed in pharyngeal muscle cell (C elegans) and 4 other cell types or tissues"/>
</dbReference>
<dbReference type="GO" id="GO:0005783">
    <property type="term" value="C:endoplasmic reticulum"/>
    <property type="evidence" value="ECO:0000318"/>
    <property type="project" value="GO_Central"/>
</dbReference>
<dbReference type="GO" id="GO:0005788">
    <property type="term" value="C:endoplasmic reticulum lumen"/>
    <property type="evidence" value="ECO:0007669"/>
    <property type="project" value="UniProtKB-SubCell"/>
</dbReference>
<dbReference type="GO" id="GO:0048471">
    <property type="term" value="C:perinuclear region of cytoplasm"/>
    <property type="evidence" value="ECO:0000318"/>
    <property type="project" value="GO_Central"/>
</dbReference>
<dbReference type="GO" id="GO:0005524">
    <property type="term" value="F:ATP binding"/>
    <property type="evidence" value="ECO:0000318"/>
    <property type="project" value="GO_Central"/>
</dbReference>
<dbReference type="GO" id="GO:0016887">
    <property type="term" value="F:ATP hydrolysis activity"/>
    <property type="evidence" value="ECO:0000318"/>
    <property type="project" value="GO_Central"/>
</dbReference>
<dbReference type="GO" id="GO:0140662">
    <property type="term" value="F:ATP-dependent protein folding chaperone"/>
    <property type="evidence" value="ECO:0007669"/>
    <property type="project" value="InterPro"/>
</dbReference>
<dbReference type="GO" id="GO:0051082">
    <property type="term" value="F:unfolded protein binding"/>
    <property type="evidence" value="ECO:0000318"/>
    <property type="project" value="GO_Central"/>
</dbReference>
<dbReference type="GO" id="GO:0036503">
    <property type="term" value="P:ERAD pathway"/>
    <property type="evidence" value="ECO:0000318"/>
    <property type="project" value="GO_Central"/>
</dbReference>
<dbReference type="GO" id="GO:0006457">
    <property type="term" value="P:protein folding"/>
    <property type="evidence" value="ECO:0000318"/>
    <property type="project" value="GO_Central"/>
</dbReference>
<dbReference type="CDD" id="cd16927">
    <property type="entry name" value="HATPase_Hsp90-like"/>
    <property type="match status" value="1"/>
</dbReference>
<dbReference type="FunFam" id="3.30.230.80:FF:000003">
    <property type="entry name" value="endoplasmin isoform X1"/>
    <property type="match status" value="1"/>
</dbReference>
<dbReference type="FunFam" id="1.20.120.790:FF:000003">
    <property type="entry name" value="Heat shock protein 90"/>
    <property type="match status" value="1"/>
</dbReference>
<dbReference type="FunFam" id="3.30.565.10:FF:000005">
    <property type="entry name" value="Heat shock protein 90"/>
    <property type="match status" value="1"/>
</dbReference>
<dbReference type="FunFam" id="3.40.50.11260:FF:000003">
    <property type="entry name" value="Heat shock protein 90"/>
    <property type="match status" value="1"/>
</dbReference>
<dbReference type="Gene3D" id="3.30.230.80">
    <property type="match status" value="1"/>
</dbReference>
<dbReference type="Gene3D" id="3.40.50.11260">
    <property type="match status" value="1"/>
</dbReference>
<dbReference type="Gene3D" id="1.20.120.790">
    <property type="entry name" value="Heat shock protein 90, C-terminal domain"/>
    <property type="match status" value="1"/>
</dbReference>
<dbReference type="Gene3D" id="3.30.565.10">
    <property type="entry name" value="Histidine kinase-like ATPase, C-terminal domain"/>
    <property type="match status" value="1"/>
</dbReference>
<dbReference type="HAMAP" id="MF_00505">
    <property type="entry name" value="HSP90"/>
    <property type="match status" value="1"/>
</dbReference>
<dbReference type="InterPro" id="IPR036890">
    <property type="entry name" value="HATPase_C_sf"/>
</dbReference>
<dbReference type="InterPro" id="IPR019805">
    <property type="entry name" value="Heat_shock_protein_90_CS"/>
</dbReference>
<dbReference type="InterPro" id="IPR037196">
    <property type="entry name" value="HSP90_C"/>
</dbReference>
<dbReference type="InterPro" id="IPR001404">
    <property type="entry name" value="Hsp90_fam"/>
</dbReference>
<dbReference type="InterPro" id="IPR020575">
    <property type="entry name" value="Hsp90_N"/>
</dbReference>
<dbReference type="InterPro" id="IPR020568">
    <property type="entry name" value="Ribosomal_Su5_D2-typ_SF"/>
</dbReference>
<dbReference type="NCBIfam" id="NF003555">
    <property type="entry name" value="PRK05218.1"/>
    <property type="match status" value="1"/>
</dbReference>
<dbReference type="PANTHER" id="PTHR11528">
    <property type="entry name" value="HEAT SHOCK PROTEIN 90 FAMILY MEMBER"/>
    <property type="match status" value="1"/>
</dbReference>
<dbReference type="Pfam" id="PF13589">
    <property type="entry name" value="HATPase_c_3"/>
    <property type="match status" value="1"/>
</dbReference>
<dbReference type="Pfam" id="PF00183">
    <property type="entry name" value="HSP90"/>
    <property type="match status" value="1"/>
</dbReference>
<dbReference type="PIRSF" id="PIRSF002583">
    <property type="entry name" value="Hsp90"/>
    <property type="match status" value="1"/>
</dbReference>
<dbReference type="PRINTS" id="PR00775">
    <property type="entry name" value="HEATSHOCK90"/>
</dbReference>
<dbReference type="SMART" id="SM00387">
    <property type="entry name" value="HATPase_c"/>
    <property type="match status" value="1"/>
</dbReference>
<dbReference type="SUPFAM" id="SSF55874">
    <property type="entry name" value="ATPase domain of HSP90 chaperone/DNA topoisomerase II/histidine kinase"/>
    <property type="match status" value="1"/>
</dbReference>
<dbReference type="SUPFAM" id="SSF110942">
    <property type="entry name" value="HSP90 C-terminal domain"/>
    <property type="match status" value="1"/>
</dbReference>
<dbReference type="SUPFAM" id="SSF54211">
    <property type="entry name" value="Ribosomal protein S5 domain 2-like"/>
    <property type="match status" value="1"/>
</dbReference>
<dbReference type="PROSITE" id="PS00298">
    <property type="entry name" value="HSP90"/>
    <property type="match status" value="1"/>
</dbReference>
<evidence type="ECO:0000250" key="1">
    <source>
        <dbReference type="UniProtKB" id="P14625"/>
    </source>
</evidence>
<evidence type="ECO:0000250" key="2">
    <source>
        <dbReference type="UniProtKB" id="P41148"/>
    </source>
</evidence>
<evidence type="ECO:0000255" key="3"/>
<evidence type="ECO:0000255" key="4">
    <source>
        <dbReference type="PROSITE-ProRule" id="PRU00498"/>
    </source>
</evidence>
<evidence type="ECO:0000256" key="5">
    <source>
        <dbReference type="SAM" id="MobiDB-lite"/>
    </source>
</evidence>
<evidence type="ECO:0000269" key="6">
    <source>
    </source>
</evidence>
<evidence type="ECO:0000305" key="7"/>
<evidence type="ECO:0000312" key="8">
    <source>
        <dbReference type="Proteomes" id="UP000001940"/>
    </source>
</evidence>
<evidence type="ECO:0000312" key="9">
    <source>
        <dbReference type="WormBase" id="T05E11.3a"/>
    </source>
</evidence>
<evidence type="ECO:0000312" key="10">
    <source>
        <dbReference type="WormBase" id="T05E11.3b"/>
    </source>
</evidence>
<comment type="function">
    <text evidence="1">Molecular chaperone that functions in the processing and transport of secreted proteins.</text>
</comment>
<comment type="subcellular location">
    <subcellularLocation>
        <location evidence="1">Endoplasmic reticulum lumen</location>
    </subcellularLocation>
</comment>
<comment type="alternative products">
    <event type="alternative splicing"/>
    <isoform>
        <id>Q22235-1</id>
        <name evidence="9">a</name>
        <sequence type="displayed"/>
    </isoform>
    <isoform>
        <id>Q22235-2</id>
        <name evidence="10">b</name>
        <sequence type="described" ref="VSP_057488"/>
    </isoform>
</comment>
<comment type="disruption phenotype">
    <text evidence="6">Adults show increased sensitivity to cisplatin, sodium arsenite and zinc. RNAi-mediated knockdown results in induction of the unfolded protein response.</text>
</comment>
<comment type="similarity">
    <text evidence="7">Belongs to the heat shock protein 90 family.</text>
</comment>
<protein>
    <recommendedName>
        <fullName evidence="9">Endoplasmin homolog</fullName>
    </recommendedName>
</protein>
<feature type="signal peptide" evidence="3">
    <location>
        <begin position="1"/>
        <end position="23"/>
    </location>
</feature>
<feature type="chain" id="PRO_0000432144" description="Endoplasmin homolog" evidence="3">
    <location>
        <begin position="24"/>
        <end position="760"/>
    </location>
</feature>
<feature type="region of interest" description="Disordered" evidence="5">
    <location>
        <begin position="727"/>
        <end position="760"/>
    </location>
</feature>
<feature type="short sequence motif" description="Prevents secretion from ER" evidence="7">
    <location>
        <begin position="757"/>
        <end position="760"/>
    </location>
</feature>
<feature type="compositionally biased region" description="Acidic residues" evidence="5">
    <location>
        <begin position="741"/>
        <end position="760"/>
    </location>
</feature>
<feature type="binding site" evidence="2">
    <location>
        <position position="95"/>
    </location>
    <ligand>
        <name>ATP</name>
        <dbReference type="ChEBI" id="CHEBI:30616"/>
    </ligand>
</feature>
<feature type="binding site" evidence="2">
    <location>
        <position position="137"/>
    </location>
    <ligand>
        <name>ATP</name>
        <dbReference type="ChEBI" id="CHEBI:30616"/>
    </ligand>
</feature>
<feature type="binding site" evidence="2">
    <location>
        <position position="150"/>
    </location>
    <ligand>
        <name>ATP</name>
        <dbReference type="ChEBI" id="CHEBI:30616"/>
    </ligand>
</feature>
<feature type="binding site" evidence="2">
    <location>
        <position position="187"/>
    </location>
    <ligand>
        <name>ATP</name>
        <dbReference type="ChEBI" id="CHEBI:30616"/>
    </ligand>
</feature>
<feature type="site" description="Important for ATP hydrolysis" evidence="2">
    <location>
        <position position="426"/>
    </location>
</feature>
<feature type="glycosylation site" description="N-linked (GlcNAc...) asparagine" evidence="4">
    <location>
        <position position="95"/>
    </location>
</feature>
<feature type="glycosylation site" description="N-linked (GlcNAc...) asparagine" evidence="4">
    <location>
        <position position="423"/>
    </location>
</feature>
<feature type="splice variant" id="VSP_057488" description="In isoform b." evidence="7">
    <location>
        <begin position="1"/>
        <end position="72"/>
    </location>
</feature>
<organism evidence="8">
    <name type="scientific">Caenorhabditis elegans</name>
    <dbReference type="NCBI Taxonomy" id="6239"/>
    <lineage>
        <taxon>Eukaryota</taxon>
        <taxon>Metazoa</taxon>
        <taxon>Ecdysozoa</taxon>
        <taxon>Nematoda</taxon>
        <taxon>Chromadorea</taxon>
        <taxon>Rhabditida</taxon>
        <taxon>Rhabditina</taxon>
        <taxon>Rhabditomorpha</taxon>
        <taxon>Rhabditoidea</taxon>
        <taxon>Rhabditidae</taxon>
        <taxon>Peloderinae</taxon>
        <taxon>Caenorhabditis</taxon>
    </lineage>
</organism>
<keyword id="KW-0025">Alternative splicing</keyword>
<keyword id="KW-0067">ATP-binding</keyword>
<keyword id="KW-0143">Chaperone</keyword>
<keyword id="KW-0256">Endoplasmic reticulum</keyword>
<keyword id="KW-0325">Glycoprotein</keyword>
<keyword id="KW-0547">Nucleotide-binding</keyword>
<keyword id="KW-1185">Reference proteome</keyword>
<keyword id="KW-0732">Signal</keyword>
<sequence>MRFLLVGFVALLAVSAFIPNVYAEDEIEDAPKETKEETREEDSIKLDGLSVSQIKELRSKAEKHEFQAEVNRMMKLIINSLYRNKEIFLRELISNASDALDKIRLLSLTDPEQLRETEEMSVKIKADRENRLLHITDTGVGMTRQDLINNLGTIARSGTSEFLSKLMDTATSSDQQQDLIGQFGVGFYAAFLVADRVVVTTKNNDDDQYIWESDSASFTISKDPRGNTLKRGTQITLYLKEEAADFLEPDTLKNLVHKYSQFINFDIFLWQSKTEMVEEAVEEEPATTEDGAVEEEKEEKKTKKVEKTTWDWEKVNNVKPIWMRKPNQVEEDEYKQFYKSITKDSEEPLSHVHFSAEGEVSFRSILYVPKKSPNDMFQNYGKVIENIKLYVRRVFITDDFADMLPKYLSFIRGIVDSDDLPLNVSRENLQQHKLLKVIKKKLVRKVLDMLKKLDGAQFDDFWSEFSTNIKLGVMEDPSNRMRLAKLLRFQSSNDADKTTTLAAYVERMKEKQDAIYYMAGTSRKEVETSPFVERLIAKGYEVLFLTEAVDEYCIQAMPEYESKKFQNVAKEGVTIDDGEKAKEAHKGLEEEFKPLTDWLKETALKDLIEKAVVSQRLVKSPSALVASSYGWSGNMERIMKSQAYAKAKDPTQDFYATQKKTFEINPRHPVIKELLKRVTASEEDTTAASTAKLLFETATLRSGFSLQDQVGFADRIEAVLRQSLDVSQDAQVETEQHIEEAEPEPEAAEETTIEEEHSEL</sequence>
<accession>Q22235</accession>
<accession>E9P859</accession>
<gene>
    <name evidence="9" type="primary">enpl-1</name>
    <name evidence="9" type="ORF">T05E11.3</name>
</gene>
<reference evidence="8" key="1">
    <citation type="journal article" date="1998" name="Science">
        <title>Genome sequence of the nematode C. elegans: a platform for investigating biology.</title>
        <authorList>
            <consortium name="The C. elegans sequencing consortium"/>
        </authorList>
    </citation>
    <scope>NUCLEOTIDE SEQUENCE [LARGE SCALE GENOMIC DNA]</scope>
    <source>
        <strain evidence="8">Bristol N2</strain>
    </source>
</reference>
<reference evidence="7" key="2">
    <citation type="journal article" date="2013" name="Worm">
        <title>Depletion of the ER chaperone ENPL-1 sensitizes C. elegans to the anticancer drug cisplatin.</title>
        <authorList>
            <person name="Natarajan B."/>
            <person name="Gaur R."/>
            <person name="Hemmingsson O."/>
            <person name="Kao G."/>
            <person name="Naredi P."/>
        </authorList>
    </citation>
    <scope>DISRUPTION PHENOTYPE</scope>
</reference>
<name>ENPL1_CAEEL</name>